<name>YDCA_ECOLI</name>
<evidence type="ECO:0000255" key="1"/>
<evidence type="ECO:0000305" key="2"/>
<reference key="1">
    <citation type="journal article" date="1988" name="Mol. Gen. Genet.">
        <title>Nucleotide sequence of the cybB gene encoding cytochrome b561 in Escherichia coli K12.</title>
        <authorList>
            <person name="Nakamura H."/>
            <person name="Murakami H."/>
            <person name="Yamato I."/>
            <person name="Anraku Y."/>
        </authorList>
    </citation>
    <scope>NUCLEOTIDE SEQUENCE [GENOMIC DNA]</scope>
    <source>
        <strain>K12</strain>
    </source>
</reference>
<reference key="2">
    <citation type="journal article" date="1996" name="DNA Res.">
        <title>A 570-kb DNA sequence of the Escherichia coli K-12 genome corresponding to the 28.0-40.1 min region on the linkage map.</title>
        <authorList>
            <person name="Aiba H."/>
            <person name="Baba T."/>
            <person name="Fujita K."/>
            <person name="Hayashi K."/>
            <person name="Inada T."/>
            <person name="Isono K."/>
            <person name="Itoh T."/>
            <person name="Kasai H."/>
            <person name="Kashimoto K."/>
            <person name="Kimura S."/>
            <person name="Kitakawa M."/>
            <person name="Kitagawa M."/>
            <person name="Makino K."/>
            <person name="Miki T."/>
            <person name="Mizobuchi K."/>
            <person name="Mori H."/>
            <person name="Mori T."/>
            <person name="Motomura K."/>
            <person name="Nakade S."/>
            <person name="Nakamura Y."/>
            <person name="Nashimoto H."/>
            <person name="Nishio Y."/>
            <person name="Oshima T."/>
            <person name="Saito N."/>
            <person name="Sampei G."/>
            <person name="Seki Y."/>
            <person name="Sivasundaram S."/>
            <person name="Tagami H."/>
            <person name="Takeda J."/>
            <person name="Takemoto K."/>
            <person name="Takeuchi Y."/>
            <person name="Wada C."/>
            <person name="Yamamoto Y."/>
            <person name="Horiuchi T."/>
        </authorList>
    </citation>
    <scope>NUCLEOTIDE SEQUENCE [LARGE SCALE GENOMIC DNA]</scope>
    <source>
        <strain>K12 / W3110 / ATCC 27325 / DSM 5911</strain>
    </source>
</reference>
<reference key="3">
    <citation type="journal article" date="1997" name="Science">
        <title>The complete genome sequence of Escherichia coli K-12.</title>
        <authorList>
            <person name="Blattner F.R."/>
            <person name="Plunkett G. III"/>
            <person name="Bloch C.A."/>
            <person name="Perna N.T."/>
            <person name="Burland V."/>
            <person name="Riley M."/>
            <person name="Collado-Vides J."/>
            <person name="Glasner J.D."/>
            <person name="Rode C.K."/>
            <person name="Mayhew G.F."/>
            <person name="Gregor J."/>
            <person name="Davis N.W."/>
            <person name="Kirkpatrick H.A."/>
            <person name="Goeden M.A."/>
            <person name="Rose D.J."/>
            <person name="Mau B."/>
            <person name="Shao Y."/>
        </authorList>
    </citation>
    <scope>NUCLEOTIDE SEQUENCE [LARGE SCALE GENOMIC DNA]</scope>
    <source>
        <strain>K12 / MG1655 / ATCC 47076</strain>
    </source>
</reference>
<reference key="4">
    <citation type="journal article" date="2006" name="Mol. Syst. Biol.">
        <title>Highly accurate genome sequences of Escherichia coli K-12 strains MG1655 and W3110.</title>
        <authorList>
            <person name="Hayashi K."/>
            <person name="Morooka N."/>
            <person name="Yamamoto Y."/>
            <person name="Fujita K."/>
            <person name="Isono K."/>
            <person name="Choi S."/>
            <person name="Ohtsubo E."/>
            <person name="Baba T."/>
            <person name="Wanner B.L."/>
            <person name="Mori H."/>
            <person name="Horiuchi T."/>
        </authorList>
    </citation>
    <scope>NUCLEOTIDE SEQUENCE [LARGE SCALE GENOMIC DNA]</scope>
    <source>
        <strain>K12 / W3110 / ATCC 27325 / DSM 5911</strain>
    </source>
</reference>
<proteinExistence type="inferred from homology"/>
<protein>
    <recommendedName>
        <fullName>Uncharacterized protein YdcA</fullName>
    </recommendedName>
</protein>
<gene>
    <name type="primary">ydcA</name>
    <name type="ordered locus">b1419</name>
    <name type="ordered locus">JW1416</name>
</gene>
<dbReference type="EMBL" id="X07569">
    <property type="protein sequence ID" value="CAA30455.1"/>
    <property type="molecule type" value="Genomic_DNA"/>
</dbReference>
<dbReference type="EMBL" id="U00096">
    <property type="protein sequence ID" value="AAC74501.1"/>
    <property type="molecule type" value="Genomic_DNA"/>
</dbReference>
<dbReference type="EMBL" id="AP009048">
    <property type="protein sequence ID" value="BAA15040.1"/>
    <property type="molecule type" value="Genomic_DNA"/>
</dbReference>
<dbReference type="PIR" id="F64893">
    <property type="entry name" value="F64893"/>
</dbReference>
<dbReference type="PIR" id="S00694">
    <property type="entry name" value="S00694"/>
</dbReference>
<dbReference type="RefSeq" id="NP_415936.1">
    <property type="nucleotide sequence ID" value="NC_000913.3"/>
</dbReference>
<dbReference type="RefSeq" id="WP_000731833.1">
    <property type="nucleotide sequence ID" value="NZ_STEB01000005.1"/>
</dbReference>
<dbReference type="SMR" id="P0ACW4"/>
<dbReference type="BioGRID" id="4262883">
    <property type="interactions" value="9"/>
</dbReference>
<dbReference type="FunCoup" id="P0ACW4">
    <property type="interactions" value="45"/>
</dbReference>
<dbReference type="IntAct" id="P0ACW4">
    <property type="interactions" value="1"/>
</dbReference>
<dbReference type="STRING" id="511145.b1419"/>
<dbReference type="jPOST" id="P0ACW4"/>
<dbReference type="PaxDb" id="511145-b1419"/>
<dbReference type="EnsemblBacteria" id="AAC74501">
    <property type="protein sequence ID" value="AAC74501"/>
    <property type="gene ID" value="b1419"/>
</dbReference>
<dbReference type="GeneID" id="945986"/>
<dbReference type="KEGG" id="ecj:JW1416"/>
<dbReference type="KEGG" id="eco:b1419"/>
<dbReference type="KEGG" id="ecoc:C3026_08265"/>
<dbReference type="PATRIC" id="fig|511145.12.peg.1483"/>
<dbReference type="EchoBASE" id="EB1202"/>
<dbReference type="eggNOG" id="ENOG5033HSK">
    <property type="taxonomic scope" value="Bacteria"/>
</dbReference>
<dbReference type="HOGENOM" id="CLU_210702_0_0_6"/>
<dbReference type="InParanoid" id="P0ACW4"/>
<dbReference type="OMA" id="GISHCSK"/>
<dbReference type="OrthoDB" id="7027094at2"/>
<dbReference type="BioCyc" id="EcoCyc:EG11219-MONOMER"/>
<dbReference type="PRO" id="PR:P0ACW4"/>
<dbReference type="Proteomes" id="UP000000625">
    <property type="component" value="Chromosome"/>
</dbReference>
<dbReference type="NCBIfam" id="NF007462">
    <property type="entry name" value="PRK10040.1-1"/>
    <property type="match status" value="1"/>
</dbReference>
<keyword id="KW-1185">Reference proteome</keyword>
<keyword id="KW-0732">Signal</keyword>
<sequence>MKKLALILFMGTLVSFYADAGRKPCSGSKGGISHCTAGGKFVCNDGSISASKKTCTN</sequence>
<feature type="signal peptide" evidence="1">
    <location>
        <begin position="1"/>
        <end position="20"/>
    </location>
</feature>
<feature type="chain" id="PRO_0000013835" description="Uncharacterized protein YdcA">
    <location>
        <begin position="21"/>
        <end position="57"/>
    </location>
</feature>
<feature type="sequence conflict" description="In Ref. 1; CAA30455." evidence="2" ref="1">
    <original>CSGS</original>
    <variation>VLVR</variation>
    <location>
        <begin position="25"/>
        <end position="28"/>
    </location>
</feature>
<feature type="sequence conflict" description="In Ref. 1." evidence="2" ref="1">
    <original>ISHCTAGGKFVCNDGSISASKKTCTN</original>
    <variation>SHTVRQAANLSVMMVLLVHRKKHALT</variation>
    <location>
        <begin position="32"/>
        <end position="57"/>
    </location>
</feature>
<organism>
    <name type="scientific">Escherichia coli (strain K12)</name>
    <dbReference type="NCBI Taxonomy" id="83333"/>
    <lineage>
        <taxon>Bacteria</taxon>
        <taxon>Pseudomonadati</taxon>
        <taxon>Pseudomonadota</taxon>
        <taxon>Gammaproteobacteria</taxon>
        <taxon>Enterobacterales</taxon>
        <taxon>Enterobacteriaceae</taxon>
        <taxon>Escherichia</taxon>
    </lineage>
</organism>
<accession>P0ACW4</accession>
<accession>P23864</accession>
<accession>P77469</accession>